<evidence type="ECO:0000255" key="1">
    <source>
        <dbReference type="HAMAP-Rule" id="MF_00340"/>
    </source>
</evidence>
<evidence type="ECO:0000256" key="2">
    <source>
        <dbReference type="SAM" id="MobiDB-lite"/>
    </source>
</evidence>
<evidence type="ECO:0000305" key="3"/>
<keyword id="KW-0687">Ribonucleoprotein</keyword>
<keyword id="KW-0689">Ribosomal protein</keyword>
<reference key="1">
    <citation type="journal article" date="2005" name="Infect. Immun.">
        <title>Comparative genomic analysis of Chlamydia trachomatis oculotropic and genitotropic strains.</title>
        <authorList>
            <person name="Carlson J.H."/>
            <person name="Porcella S.F."/>
            <person name="McClarty G."/>
            <person name="Caldwell H.D."/>
        </authorList>
    </citation>
    <scope>NUCLEOTIDE SEQUENCE [LARGE SCALE GENOMIC DNA]</scope>
    <source>
        <strain>ATCC VR-571B / DSM 19440 / HAR-13</strain>
    </source>
</reference>
<gene>
    <name evidence="1" type="primary">rpmF</name>
    <name type="ordered locus">CTA_0882</name>
</gene>
<dbReference type="EMBL" id="CP000051">
    <property type="protein sequence ID" value="AAX51091.1"/>
    <property type="molecule type" value="Genomic_DNA"/>
</dbReference>
<dbReference type="RefSeq" id="WP_009872193.1">
    <property type="nucleotide sequence ID" value="NC_007429.1"/>
</dbReference>
<dbReference type="SMR" id="Q3KKN1"/>
<dbReference type="KEGG" id="cta:CTA_0882"/>
<dbReference type="HOGENOM" id="CLU_129084_1_3_0"/>
<dbReference type="Proteomes" id="UP000002532">
    <property type="component" value="Chromosome"/>
</dbReference>
<dbReference type="GO" id="GO:0015934">
    <property type="term" value="C:large ribosomal subunit"/>
    <property type="evidence" value="ECO:0007669"/>
    <property type="project" value="InterPro"/>
</dbReference>
<dbReference type="GO" id="GO:0003735">
    <property type="term" value="F:structural constituent of ribosome"/>
    <property type="evidence" value="ECO:0007669"/>
    <property type="project" value="InterPro"/>
</dbReference>
<dbReference type="GO" id="GO:0006412">
    <property type="term" value="P:translation"/>
    <property type="evidence" value="ECO:0007669"/>
    <property type="project" value="UniProtKB-UniRule"/>
</dbReference>
<dbReference type="HAMAP" id="MF_00340">
    <property type="entry name" value="Ribosomal_bL32"/>
    <property type="match status" value="1"/>
</dbReference>
<dbReference type="InterPro" id="IPR002677">
    <property type="entry name" value="Ribosomal_bL32"/>
</dbReference>
<dbReference type="InterPro" id="IPR044957">
    <property type="entry name" value="Ribosomal_bL32_bact"/>
</dbReference>
<dbReference type="InterPro" id="IPR011332">
    <property type="entry name" value="Ribosomal_zn-bd"/>
</dbReference>
<dbReference type="NCBIfam" id="TIGR01031">
    <property type="entry name" value="rpmF_bact"/>
    <property type="match status" value="1"/>
</dbReference>
<dbReference type="PANTHER" id="PTHR35534">
    <property type="entry name" value="50S RIBOSOMAL PROTEIN L32"/>
    <property type="match status" value="1"/>
</dbReference>
<dbReference type="PANTHER" id="PTHR35534:SF1">
    <property type="entry name" value="LARGE RIBOSOMAL SUBUNIT PROTEIN BL32"/>
    <property type="match status" value="1"/>
</dbReference>
<dbReference type="Pfam" id="PF01783">
    <property type="entry name" value="Ribosomal_L32p"/>
    <property type="match status" value="1"/>
</dbReference>
<dbReference type="SUPFAM" id="SSF57829">
    <property type="entry name" value="Zn-binding ribosomal proteins"/>
    <property type="match status" value="1"/>
</dbReference>
<comment type="similarity">
    <text evidence="1">Belongs to the bacterial ribosomal protein bL32 family.</text>
</comment>
<proteinExistence type="inferred from homology"/>
<protein>
    <recommendedName>
        <fullName evidence="1">Large ribosomal subunit protein bL32</fullName>
    </recommendedName>
    <alternativeName>
        <fullName evidence="3">50S ribosomal protein L32</fullName>
    </alternativeName>
</protein>
<feature type="chain" id="PRO_0000225714" description="Large ribosomal subunit protein bL32">
    <location>
        <begin position="1"/>
        <end position="59"/>
    </location>
</feature>
<feature type="region of interest" description="Disordered" evidence="2">
    <location>
        <begin position="1"/>
        <end position="20"/>
    </location>
</feature>
<sequence>MAVPRNRHSNARKNIRRSHHAKKACSAAVCSNCKQAFIPHTVCASCGFYKGKAVITVEK</sequence>
<accession>Q3KKN1</accession>
<organism>
    <name type="scientific">Chlamydia trachomatis serovar A (strain ATCC VR-571B / DSM 19440 / HAR-13)</name>
    <dbReference type="NCBI Taxonomy" id="315277"/>
    <lineage>
        <taxon>Bacteria</taxon>
        <taxon>Pseudomonadati</taxon>
        <taxon>Chlamydiota</taxon>
        <taxon>Chlamydiia</taxon>
        <taxon>Chlamydiales</taxon>
        <taxon>Chlamydiaceae</taxon>
        <taxon>Chlamydia/Chlamydophila group</taxon>
        <taxon>Chlamydia</taxon>
    </lineage>
</organism>
<name>RL32_CHLTA</name>